<accession>P49094</accession>
<sequence length="586" mass="66578">MCGILAVLGVVEVSLAKRSRIIELSRRLRHRGPDWSGLHCHEDCYLAHQRLAIIDPTSGDQPLYNEDKTVVVTVNGEIYNHEELKAKLKTHEFQTGSDCEVIAHLYEEYGEEFVDMLDGMFSFVLLDTRDKSFIAARDAIGICPLYMGWGLDGSVWFSSEMKALSDDCERFITFPPGHLYSSKTGGLRRWYNPPWFSETVPSTPYNALFLREMFEKAVIKRLMTDVPFGVLLSGGLDSSLVASVASRHLNETKVDRQWGNKLHTFCIGLKGSPDLKAAREVADYLSTVHHEFHFTVQEGIDALEEVIYHIETYDVTTIRASTPMFLMSRKIKSLGVKMVISGEGSDEIFGGYLYFHKAPNKKEFLEETCRKIKALHLYDCLRANKATSAWGVEARVPFLDKSFISVAMDIDPEWNMIKRDLGRIEKWVMRKAFDDDEHPYLPKHILYRQKEQFSDGVGYNWIDGLKSFTEQQVTDEMMNNAAQMFPYNTPVNKEAYYYRMIFERLFPQDSARETVPWGPSIACSTPAAIEWVEQWKASNDPSGRFISSHDSAATDHTAVSRRWPTAAARPANGTVNGKDVPVPIAV</sequence>
<evidence type="ECO:0000250" key="1"/>
<evidence type="ECO:0000255" key="2">
    <source>
        <dbReference type="PROSITE-ProRule" id="PRU00609"/>
    </source>
</evidence>
<proteinExistence type="evidence at transcript level"/>
<name>ASNS_MAIZE</name>
<reference key="1">
    <citation type="journal article" date="1996" name="Plant J.">
        <title>Metabolic regulation of asparagine synthetase gene expression in maize (Zea mays L.) root tips.</title>
        <authorList>
            <person name="Chevalier C."/>
            <person name="Bourgeois E."/>
            <person name="Just D."/>
            <person name="Raymond P."/>
        </authorList>
    </citation>
    <scope>NUCLEOTIDE SEQUENCE [MRNA]</scope>
    <source>
        <strain>cv. DEA</strain>
        <tissue>Root meristem</tissue>
    </source>
</reference>
<comment type="function">
    <text evidence="1">Essential for nitrogen assimilation, distribution and remobilization within the plant via the phloem.</text>
</comment>
<comment type="catalytic activity">
    <reaction>
        <text>L-aspartate + L-glutamine + ATP + H2O = L-asparagine + L-glutamate + AMP + diphosphate + H(+)</text>
        <dbReference type="Rhea" id="RHEA:12228"/>
        <dbReference type="ChEBI" id="CHEBI:15377"/>
        <dbReference type="ChEBI" id="CHEBI:15378"/>
        <dbReference type="ChEBI" id="CHEBI:29985"/>
        <dbReference type="ChEBI" id="CHEBI:29991"/>
        <dbReference type="ChEBI" id="CHEBI:30616"/>
        <dbReference type="ChEBI" id="CHEBI:33019"/>
        <dbReference type="ChEBI" id="CHEBI:58048"/>
        <dbReference type="ChEBI" id="CHEBI:58359"/>
        <dbReference type="ChEBI" id="CHEBI:456215"/>
        <dbReference type="EC" id="6.3.5.4"/>
    </reaction>
</comment>
<comment type="pathway">
    <text>Amino-acid biosynthesis; L-asparagine biosynthesis; L-asparagine from L-aspartate (L-Gln route): step 1/1.</text>
</comment>
<organism>
    <name type="scientific">Zea mays</name>
    <name type="common">Maize</name>
    <dbReference type="NCBI Taxonomy" id="4577"/>
    <lineage>
        <taxon>Eukaryota</taxon>
        <taxon>Viridiplantae</taxon>
        <taxon>Streptophyta</taxon>
        <taxon>Embryophyta</taxon>
        <taxon>Tracheophyta</taxon>
        <taxon>Spermatophyta</taxon>
        <taxon>Magnoliopsida</taxon>
        <taxon>Liliopsida</taxon>
        <taxon>Poales</taxon>
        <taxon>Poaceae</taxon>
        <taxon>PACMAD clade</taxon>
        <taxon>Panicoideae</taxon>
        <taxon>Andropogonodae</taxon>
        <taxon>Andropogoneae</taxon>
        <taxon>Tripsacinae</taxon>
        <taxon>Zea</taxon>
    </lineage>
</organism>
<dbReference type="EC" id="6.3.5.4"/>
<dbReference type="EMBL" id="X82849">
    <property type="protein sequence ID" value="CAA58052.1"/>
    <property type="molecule type" value="mRNA"/>
</dbReference>
<dbReference type="PIR" id="T02978">
    <property type="entry name" value="T02978"/>
</dbReference>
<dbReference type="SMR" id="P49094"/>
<dbReference type="STRING" id="4577.P49094"/>
<dbReference type="PaxDb" id="4577-GRMZM2G074589_P01"/>
<dbReference type="MaizeGDB" id="79071"/>
<dbReference type="InParanoid" id="P49094"/>
<dbReference type="UniPathway" id="UPA00134">
    <property type="reaction ID" value="UER00195"/>
</dbReference>
<dbReference type="Proteomes" id="UP000007305">
    <property type="component" value="Unplaced"/>
</dbReference>
<dbReference type="ExpressionAtlas" id="P49094">
    <property type="expression patterns" value="baseline and differential"/>
</dbReference>
<dbReference type="GO" id="GO:0005829">
    <property type="term" value="C:cytosol"/>
    <property type="evidence" value="ECO:0000318"/>
    <property type="project" value="GO_Central"/>
</dbReference>
<dbReference type="GO" id="GO:0004066">
    <property type="term" value="F:asparagine synthase (glutamine-hydrolyzing) activity"/>
    <property type="evidence" value="ECO:0000318"/>
    <property type="project" value="GO_Central"/>
</dbReference>
<dbReference type="GO" id="GO:0005524">
    <property type="term" value="F:ATP binding"/>
    <property type="evidence" value="ECO:0007669"/>
    <property type="project" value="UniProtKB-KW"/>
</dbReference>
<dbReference type="GO" id="GO:0006529">
    <property type="term" value="P:asparagine biosynthetic process"/>
    <property type="evidence" value="ECO:0000318"/>
    <property type="project" value="GO_Central"/>
</dbReference>
<dbReference type="GO" id="GO:0070981">
    <property type="term" value="P:L-asparagine biosynthetic process"/>
    <property type="evidence" value="ECO:0007669"/>
    <property type="project" value="UniProtKB-UniPathway"/>
</dbReference>
<dbReference type="CDD" id="cd01991">
    <property type="entry name" value="Asn_synthase_B_C"/>
    <property type="match status" value="1"/>
</dbReference>
<dbReference type="CDD" id="cd00712">
    <property type="entry name" value="AsnB"/>
    <property type="match status" value="1"/>
</dbReference>
<dbReference type="FunFam" id="3.40.50.620:FF:000055">
    <property type="entry name" value="Asparagine synthetase [glutamine-hydrolyzing]"/>
    <property type="match status" value="1"/>
</dbReference>
<dbReference type="FunFam" id="3.60.20.10:FF:000024">
    <property type="entry name" value="Asparagine synthetase [glutamine-hydrolyzing]"/>
    <property type="match status" value="1"/>
</dbReference>
<dbReference type="Gene3D" id="3.60.20.10">
    <property type="entry name" value="Glutamine Phosphoribosylpyrophosphate, subunit 1, domain 1"/>
    <property type="match status" value="1"/>
</dbReference>
<dbReference type="Gene3D" id="3.40.50.620">
    <property type="entry name" value="HUPs"/>
    <property type="match status" value="1"/>
</dbReference>
<dbReference type="InterPro" id="IPR006426">
    <property type="entry name" value="Asn_synth_AEB"/>
</dbReference>
<dbReference type="InterPro" id="IPR001962">
    <property type="entry name" value="Asn_synthase"/>
</dbReference>
<dbReference type="InterPro" id="IPR050795">
    <property type="entry name" value="Asn_Synthetase"/>
</dbReference>
<dbReference type="InterPro" id="IPR033738">
    <property type="entry name" value="AsnB_N"/>
</dbReference>
<dbReference type="InterPro" id="IPR017932">
    <property type="entry name" value="GATase_2_dom"/>
</dbReference>
<dbReference type="InterPro" id="IPR029055">
    <property type="entry name" value="Ntn_hydrolases_N"/>
</dbReference>
<dbReference type="InterPro" id="IPR014729">
    <property type="entry name" value="Rossmann-like_a/b/a_fold"/>
</dbReference>
<dbReference type="NCBIfam" id="NF006949">
    <property type="entry name" value="PRK09431.1"/>
    <property type="match status" value="1"/>
</dbReference>
<dbReference type="PANTHER" id="PTHR11772">
    <property type="entry name" value="ASPARAGINE SYNTHETASE"/>
    <property type="match status" value="1"/>
</dbReference>
<dbReference type="PANTHER" id="PTHR11772:SF2">
    <property type="entry name" value="ASPARAGINE SYNTHETASE [GLUTAMINE-HYDROLYZING]"/>
    <property type="match status" value="1"/>
</dbReference>
<dbReference type="Pfam" id="PF00733">
    <property type="entry name" value="Asn_synthase"/>
    <property type="match status" value="1"/>
</dbReference>
<dbReference type="Pfam" id="PF13537">
    <property type="entry name" value="GATase_7"/>
    <property type="match status" value="1"/>
</dbReference>
<dbReference type="PIRSF" id="PIRSF001589">
    <property type="entry name" value="Asn_synthetase_glu-h"/>
    <property type="match status" value="1"/>
</dbReference>
<dbReference type="SUPFAM" id="SSF52402">
    <property type="entry name" value="Adenine nucleotide alpha hydrolases-like"/>
    <property type="match status" value="1"/>
</dbReference>
<dbReference type="SUPFAM" id="SSF56235">
    <property type="entry name" value="N-terminal nucleophile aminohydrolases (Ntn hydrolases)"/>
    <property type="match status" value="1"/>
</dbReference>
<dbReference type="PROSITE" id="PS51278">
    <property type="entry name" value="GATASE_TYPE_2"/>
    <property type="match status" value="1"/>
</dbReference>
<feature type="initiator methionine" description="Removed" evidence="1">
    <location>
        <position position="1"/>
    </location>
</feature>
<feature type="chain" id="PRO_0000056924" description="Asparagine synthetase [glutamine-hydrolyzing]">
    <location>
        <begin position="2"/>
        <end position="586"/>
    </location>
</feature>
<feature type="domain" description="Glutamine amidotransferase type-2" evidence="2">
    <location>
        <begin position="2"/>
        <end position="185"/>
    </location>
</feature>
<feature type="domain" description="Asparagine synthetase">
    <location>
        <begin position="193"/>
        <end position="516"/>
    </location>
</feature>
<feature type="active site" description="For GATase activity" evidence="1">
    <location>
        <position position="2"/>
    </location>
</feature>
<feature type="binding site" evidence="1">
    <location>
        <begin position="50"/>
        <end position="54"/>
    </location>
    <ligand>
        <name>L-glutamine</name>
        <dbReference type="ChEBI" id="CHEBI:58359"/>
    </ligand>
</feature>
<feature type="binding site" evidence="1">
    <location>
        <begin position="75"/>
        <end position="77"/>
    </location>
    <ligand>
        <name>L-glutamine</name>
        <dbReference type="ChEBI" id="CHEBI:58359"/>
    </ligand>
</feature>
<feature type="binding site" evidence="1">
    <location>
        <position position="98"/>
    </location>
    <ligand>
        <name>L-glutamine</name>
        <dbReference type="ChEBI" id="CHEBI:58359"/>
    </ligand>
</feature>
<feature type="binding site" evidence="1">
    <location>
        <position position="231"/>
    </location>
    <ligand>
        <name>ATP</name>
        <dbReference type="ChEBI" id="CHEBI:30616"/>
    </ligand>
</feature>
<feature type="binding site" evidence="1">
    <location>
        <position position="267"/>
    </location>
    <ligand>
        <name>ATP</name>
        <dbReference type="ChEBI" id="CHEBI:30616"/>
    </ligand>
</feature>
<feature type="binding site" evidence="1">
    <location>
        <begin position="341"/>
        <end position="342"/>
    </location>
    <ligand>
        <name>ATP</name>
        <dbReference type="ChEBI" id="CHEBI:30616"/>
    </ligand>
</feature>
<feature type="site" description="Important for beta-aspartyl-AMP intermediate formation" evidence="1">
    <location>
        <position position="343"/>
    </location>
</feature>
<protein>
    <recommendedName>
        <fullName>Asparagine synthetase [glutamine-hydrolyzing]</fullName>
        <ecNumber>6.3.5.4</ecNumber>
    </recommendedName>
    <alternativeName>
        <fullName>Glutamine-dependent asparagine synthetase</fullName>
    </alternativeName>
</protein>
<gene>
    <name type="primary">ASN1</name>
    <name type="synonym">AS</name>
</gene>
<keyword id="KW-0028">Amino-acid biosynthesis</keyword>
<keyword id="KW-0061">Asparagine biosynthesis</keyword>
<keyword id="KW-0067">ATP-binding</keyword>
<keyword id="KW-0315">Glutamine amidotransferase</keyword>
<keyword id="KW-0436">Ligase</keyword>
<keyword id="KW-0547">Nucleotide-binding</keyword>
<keyword id="KW-1185">Reference proteome</keyword>